<organism>
    <name type="scientific">Blochmanniella pennsylvanica (strain BPEN)</name>
    <dbReference type="NCBI Taxonomy" id="291272"/>
    <lineage>
        <taxon>Bacteria</taxon>
        <taxon>Pseudomonadati</taxon>
        <taxon>Pseudomonadota</taxon>
        <taxon>Gammaproteobacteria</taxon>
        <taxon>Enterobacterales</taxon>
        <taxon>Enterobacteriaceae</taxon>
        <taxon>ant endosymbionts</taxon>
        <taxon>Candidatus Blochmanniella</taxon>
    </lineage>
</organism>
<evidence type="ECO:0000255" key="1">
    <source>
        <dbReference type="HAMAP-Rule" id="MF_00222"/>
    </source>
</evidence>
<reference key="1">
    <citation type="journal article" date="2005" name="Genome Res.">
        <title>Genome sequence of Blochmannia pennsylvanicus indicates parallel evolutionary trends among bacterial mutualists of insects.</title>
        <authorList>
            <person name="Degnan P.H."/>
            <person name="Lazarus A.B."/>
            <person name="Wernegreen J.J."/>
        </authorList>
    </citation>
    <scope>NUCLEOTIDE SEQUENCE [LARGE SCALE GENOMIC DNA]</scope>
    <source>
        <strain>BPEN</strain>
    </source>
</reference>
<comment type="function">
    <text evidence="1">Involved in the biosynthesis of the chorismate, which leads to the biosynthesis of aromatic amino acids. Catalyzes the reversible NADPH linked reduction of 3-dehydroshikimate (DHSA) to yield shikimate (SA).</text>
</comment>
<comment type="catalytic activity">
    <reaction evidence="1">
        <text>shikimate + NADP(+) = 3-dehydroshikimate + NADPH + H(+)</text>
        <dbReference type="Rhea" id="RHEA:17737"/>
        <dbReference type="ChEBI" id="CHEBI:15378"/>
        <dbReference type="ChEBI" id="CHEBI:16630"/>
        <dbReference type="ChEBI" id="CHEBI:36208"/>
        <dbReference type="ChEBI" id="CHEBI:57783"/>
        <dbReference type="ChEBI" id="CHEBI:58349"/>
        <dbReference type="EC" id="1.1.1.25"/>
    </reaction>
</comment>
<comment type="pathway">
    <text evidence="1">Metabolic intermediate biosynthesis; chorismate biosynthesis; chorismate from D-erythrose 4-phosphate and phosphoenolpyruvate: step 4/7.</text>
</comment>
<comment type="subunit">
    <text evidence="1">Homodimer.</text>
</comment>
<comment type="similarity">
    <text evidence="1">Belongs to the shikimate dehydrogenase family.</text>
</comment>
<proteinExistence type="inferred from homology"/>
<dbReference type="EC" id="1.1.1.25" evidence="1"/>
<dbReference type="EMBL" id="CP000016">
    <property type="protein sequence ID" value="AAZ40861.1"/>
    <property type="molecule type" value="Genomic_DNA"/>
</dbReference>
<dbReference type="RefSeq" id="WP_011282768.1">
    <property type="nucleotide sequence ID" value="NC_007292.1"/>
</dbReference>
<dbReference type="SMR" id="Q493H9"/>
<dbReference type="STRING" id="291272.BPEN_228"/>
<dbReference type="KEGG" id="bpn:BPEN_228"/>
<dbReference type="eggNOG" id="COG0169">
    <property type="taxonomic scope" value="Bacteria"/>
</dbReference>
<dbReference type="HOGENOM" id="CLU_044063_2_1_6"/>
<dbReference type="OrthoDB" id="9776868at2"/>
<dbReference type="UniPathway" id="UPA00053">
    <property type="reaction ID" value="UER00087"/>
</dbReference>
<dbReference type="Proteomes" id="UP000007794">
    <property type="component" value="Chromosome"/>
</dbReference>
<dbReference type="GO" id="GO:0005829">
    <property type="term" value="C:cytosol"/>
    <property type="evidence" value="ECO:0007669"/>
    <property type="project" value="TreeGrafter"/>
</dbReference>
<dbReference type="GO" id="GO:0050661">
    <property type="term" value="F:NADP binding"/>
    <property type="evidence" value="ECO:0007669"/>
    <property type="project" value="InterPro"/>
</dbReference>
<dbReference type="GO" id="GO:0004764">
    <property type="term" value="F:shikimate 3-dehydrogenase (NADP+) activity"/>
    <property type="evidence" value="ECO:0007669"/>
    <property type="project" value="UniProtKB-UniRule"/>
</dbReference>
<dbReference type="GO" id="GO:0008652">
    <property type="term" value="P:amino acid biosynthetic process"/>
    <property type="evidence" value="ECO:0007669"/>
    <property type="project" value="UniProtKB-KW"/>
</dbReference>
<dbReference type="GO" id="GO:0009073">
    <property type="term" value="P:aromatic amino acid family biosynthetic process"/>
    <property type="evidence" value="ECO:0007669"/>
    <property type="project" value="UniProtKB-KW"/>
</dbReference>
<dbReference type="GO" id="GO:0009423">
    <property type="term" value="P:chorismate biosynthetic process"/>
    <property type="evidence" value="ECO:0007669"/>
    <property type="project" value="UniProtKB-UniRule"/>
</dbReference>
<dbReference type="GO" id="GO:0019632">
    <property type="term" value="P:shikimate metabolic process"/>
    <property type="evidence" value="ECO:0007669"/>
    <property type="project" value="InterPro"/>
</dbReference>
<dbReference type="CDD" id="cd01065">
    <property type="entry name" value="NAD_bind_Shikimate_DH"/>
    <property type="match status" value="1"/>
</dbReference>
<dbReference type="FunFam" id="3.40.50.10860:FF:000006">
    <property type="entry name" value="Shikimate dehydrogenase (NADP(+))"/>
    <property type="match status" value="1"/>
</dbReference>
<dbReference type="Gene3D" id="3.40.50.10860">
    <property type="entry name" value="Leucine Dehydrogenase, chain A, domain 1"/>
    <property type="match status" value="1"/>
</dbReference>
<dbReference type="Gene3D" id="3.40.50.720">
    <property type="entry name" value="NAD(P)-binding Rossmann-like Domain"/>
    <property type="match status" value="1"/>
</dbReference>
<dbReference type="HAMAP" id="MF_00222">
    <property type="entry name" value="Shikimate_DH_AroE"/>
    <property type="match status" value="1"/>
</dbReference>
<dbReference type="InterPro" id="IPR046346">
    <property type="entry name" value="Aminoacid_DH-like_N_sf"/>
</dbReference>
<dbReference type="InterPro" id="IPR036291">
    <property type="entry name" value="NAD(P)-bd_dom_sf"/>
</dbReference>
<dbReference type="InterPro" id="IPR011342">
    <property type="entry name" value="Shikimate_DH"/>
</dbReference>
<dbReference type="InterPro" id="IPR013708">
    <property type="entry name" value="Shikimate_DH-bd_N"/>
</dbReference>
<dbReference type="InterPro" id="IPR022893">
    <property type="entry name" value="Shikimate_DH_fam"/>
</dbReference>
<dbReference type="InterPro" id="IPR006151">
    <property type="entry name" value="Shikm_DH/Glu-tRNA_Rdtase"/>
</dbReference>
<dbReference type="NCBIfam" id="TIGR00507">
    <property type="entry name" value="aroE"/>
    <property type="match status" value="1"/>
</dbReference>
<dbReference type="NCBIfam" id="NF001310">
    <property type="entry name" value="PRK00258.1-2"/>
    <property type="match status" value="1"/>
</dbReference>
<dbReference type="PANTHER" id="PTHR21089:SF1">
    <property type="entry name" value="BIFUNCTIONAL 3-DEHYDROQUINATE DEHYDRATASE_SHIKIMATE DEHYDROGENASE, CHLOROPLASTIC"/>
    <property type="match status" value="1"/>
</dbReference>
<dbReference type="PANTHER" id="PTHR21089">
    <property type="entry name" value="SHIKIMATE DEHYDROGENASE"/>
    <property type="match status" value="1"/>
</dbReference>
<dbReference type="Pfam" id="PF01488">
    <property type="entry name" value="Shikimate_DH"/>
    <property type="match status" value="1"/>
</dbReference>
<dbReference type="Pfam" id="PF08501">
    <property type="entry name" value="Shikimate_dh_N"/>
    <property type="match status" value="1"/>
</dbReference>
<dbReference type="SUPFAM" id="SSF53223">
    <property type="entry name" value="Aminoacid dehydrogenase-like, N-terminal domain"/>
    <property type="match status" value="1"/>
</dbReference>
<dbReference type="SUPFAM" id="SSF51735">
    <property type="entry name" value="NAD(P)-binding Rossmann-fold domains"/>
    <property type="match status" value="1"/>
</dbReference>
<protein>
    <recommendedName>
        <fullName evidence="1">Shikimate dehydrogenase (NADP(+))</fullName>
        <shortName evidence="1">SDH</shortName>
        <ecNumber evidence="1">1.1.1.25</ecNumber>
    </recommendedName>
</protein>
<accession>Q493H9</accession>
<sequence length="291" mass="32769">MNSFAVFGNPIRHSKSAEIYALFAHEIGISKEYNLKLAVQDNFNYLLHNFFKLGGLGANITSPFKENAYFLCNQLTERAEKARSVNTIKKLKNGTLLGDNTDGIGFISDLKRLNWLDNNNQIISNDAPIPMVTNILLIGAGGAAKGIVPILLTTITTCHINIVNRTFSRAQELTSYYQEIGYKNISCLPLYKLRYDTNKYSLIINATTSNIHNTIPKIPYFLITPDTKCYDLFYTKQDTLFITWCKKNGANYCADGLGMLVGQAAHSFLLWHNTFPTINPVIDHLRSAFYM</sequence>
<gene>
    <name evidence="1" type="primary">aroE</name>
    <name type="ordered locus">BPEN_228</name>
</gene>
<feature type="chain" id="PRO_1000021266" description="Shikimate dehydrogenase (NADP(+))">
    <location>
        <begin position="1"/>
        <end position="291"/>
    </location>
</feature>
<feature type="active site" description="Proton acceptor" evidence="1">
    <location>
        <position position="65"/>
    </location>
</feature>
<feature type="binding site" evidence="1">
    <location>
        <begin position="14"/>
        <end position="16"/>
    </location>
    <ligand>
        <name>shikimate</name>
        <dbReference type="ChEBI" id="CHEBI:36208"/>
    </ligand>
</feature>
<feature type="binding site" evidence="1">
    <location>
        <position position="61"/>
    </location>
    <ligand>
        <name>shikimate</name>
        <dbReference type="ChEBI" id="CHEBI:36208"/>
    </ligand>
</feature>
<feature type="binding site" evidence="1">
    <location>
        <position position="77"/>
    </location>
    <ligand>
        <name>NADP(+)</name>
        <dbReference type="ChEBI" id="CHEBI:58349"/>
    </ligand>
</feature>
<feature type="binding site" evidence="1">
    <location>
        <position position="86"/>
    </location>
    <ligand>
        <name>shikimate</name>
        <dbReference type="ChEBI" id="CHEBI:36208"/>
    </ligand>
</feature>
<feature type="binding site" evidence="1">
    <location>
        <position position="102"/>
    </location>
    <ligand>
        <name>shikimate</name>
        <dbReference type="ChEBI" id="CHEBI:36208"/>
    </ligand>
</feature>
<feature type="binding site" evidence="1">
    <location>
        <begin position="139"/>
        <end position="143"/>
    </location>
    <ligand>
        <name>NADP(+)</name>
        <dbReference type="ChEBI" id="CHEBI:58349"/>
    </ligand>
</feature>
<feature type="binding site" evidence="1">
    <location>
        <begin position="164"/>
        <end position="169"/>
    </location>
    <ligand>
        <name>NADP(+)</name>
        <dbReference type="ChEBI" id="CHEBI:58349"/>
    </ligand>
</feature>
<feature type="binding site" evidence="1">
    <location>
        <position position="232"/>
    </location>
    <ligand>
        <name>NADP(+)</name>
        <dbReference type="ChEBI" id="CHEBI:58349"/>
    </ligand>
</feature>
<feature type="binding site" evidence="1">
    <location>
        <position position="234"/>
    </location>
    <ligand>
        <name>shikimate</name>
        <dbReference type="ChEBI" id="CHEBI:36208"/>
    </ligand>
</feature>
<feature type="binding site" evidence="1">
    <location>
        <position position="256"/>
    </location>
    <ligand>
        <name>NADP(+)</name>
        <dbReference type="ChEBI" id="CHEBI:58349"/>
    </ligand>
</feature>
<keyword id="KW-0028">Amino-acid biosynthesis</keyword>
<keyword id="KW-0057">Aromatic amino acid biosynthesis</keyword>
<keyword id="KW-0521">NADP</keyword>
<keyword id="KW-0560">Oxidoreductase</keyword>
<keyword id="KW-1185">Reference proteome</keyword>
<name>AROE_BLOPB</name>